<proteinExistence type="evidence at transcript level"/>
<gene>
    <name evidence="5" type="primary">WDL1</name>
    <name evidence="6" type="synonym">GELP112</name>
    <name evidence="9" type="ordered locus">Os11g0708400</name>
    <name evidence="8" type="ordered locus">LOC_Os11g48070</name>
    <name evidence="10" type="ORF">OsJ_34891</name>
</gene>
<evidence type="ECO:0000250" key="1">
    <source>
        <dbReference type="UniProtKB" id="P0ADA1"/>
    </source>
</evidence>
<evidence type="ECO:0000255" key="2"/>
<evidence type="ECO:0000255" key="3">
    <source>
        <dbReference type="PROSITE-ProRule" id="PRU00498"/>
    </source>
</evidence>
<evidence type="ECO:0000269" key="4">
    <source>
    </source>
</evidence>
<evidence type="ECO:0000303" key="5">
    <source>
    </source>
</evidence>
<evidence type="ECO:0000303" key="6">
    <source>
    </source>
</evidence>
<evidence type="ECO:0000305" key="7"/>
<evidence type="ECO:0000312" key="8">
    <source>
        <dbReference type="EMBL" id="ABA95533.1"/>
    </source>
</evidence>
<evidence type="ECO:0000312" key="9">
    <source>
        <dbReference type="EMBL" id="BAT15431.1"/>
    </source>
</evidence>
<evidence type="ECO:0000312" key="10">
    <source>
        <dbReference type="EMBL" id="EAZ19341.1"/>
    </source>
</evidence>
<accession>Q7XXR3</accession>
<accession>A3CE28</accession>
<keyword id="KW-0256">Endoplasmic reticulum</keyword>
<keyword id="KW-0325">Glycoprotein</keyword>
<keyword id="KW-0378">Hydrolase</keyword>
<keyword id="KW-1185">Reference proteome</keyword>
<keyword id="KW-0732">Signal</keyword>
<sequence>MLGFAPAPGRPLFVLFGSSIVQFSFSNGGWGAALADIYARKADILLRGYIGWNSRRALQVIDKIFPKDSPVQPSLVIVYFGGNDSVAAHSSGLGPHVPLEEYIDNMRKIADHLKSLSEKTRVIFLSCPPLNEETLRKSTSTVLSEIVRTNETCRLYSEACVSLCKEMDLKVVDLWNAMQKRDDWATACFTDGLHLSEEGSKIVVEEILRILKEAEWDPCLHWKAMPTEFGEDSPYDLVSSSGQSTVNPSDWTFHRTIQWD</sequence>
<reference key="1">
    <citation type="journal article" date="2005" name="Plant Cell">
        <title>Functional isolation of novel nuclear proteins showing a variety of subnuclear localizations.</title>
        <authorList>
            <person name="Moriguchi K."/>
            <person name="Suzuki T."/>
            <person name="Ito Y."/>
            <person name="Yamazaki Y."/>
            <person name="Niwa Y."/>
            <person name="Kurata N."/>
        </authorList>
    </citation>
    <scope>NUCLEOTIDE SEQUENCE [MRNA]</scope>
    <source>
        <tissue>Panicle</tissue>
    </source>
</reference>
<reference key="2">
    <citation type="journal article" date="2005" name="BMC Biol.">
        <title>The sequence of rice chromosomes 11 and 12, rich in disease resistance genes and recent gene duplications.</title>
        <authorList>
            <consortium name="The rice chromosomes 11 and 12 sequencing consortia"/>
        </authorList>
    </citation>
    <scope>NUCLEOTIDE SEQUENCE [LARGE SCALE GENOMIC DNA]</scope>
    <source>
        <strain>cv. Nipponbare</strain>
    </source>
</reference>
<reference key="3">
    <citation type="journal article" date="2005" name="Nature">
        <title>The map-based sequence of the rice genome.</title>
        <authorList>
            <consortium name="International rice genome sequencing project (IRGSP)"/>
        </authorList>
    </citation>
    <scope>NUCLEOTIDE SEQUENCE [LARGE SCALE GENOMIC DNA]</scope>
    <source>
        <strain>cv. Nipponbare</strain>
    </source>
</reference>
<reference key="4">
    <citation type="journal article" date="2008" name="Nucleic Acids Res.">
        <title>The rice annotation project database (RAP-DB): 2008 update.</title>
        <authorList>
            <consortium name="The rice annotation project (RAP)"/>
        </authorList>
    </citation>
    <scope>GENOME REANNOTATION</scope>
    <source>
        <strain>cv. Nipponbare</strain>
    </source>
</reference>
<reference key="5">
    <citation type="journal article" date="2013" name="Rice">
        <title>Improvement of the Oryza sativa Nipponbare reference genome using next generation sequence and optical map data.</title>
        <authorList>
            <person name="Kawahara Y."/>
            <person name="de la Bastide M."/>
            <person name="Hamilton J.P."/>
            <person name="Kanamori H."/>
            <person name="McCombie W.R."/>
            <person name="Ouyang S."/>
            <person name="Schwartz D.C."/>
            <person name="Tanaka T."/>
            <person name="Wu J."/>
            <person name="Zhou S."/>
            <person name="Childs K.L."/>
            <person name="Davidson R.M."/>
            <person name="Lin H."/>
            <person name="Quesada-Ocampo L."/>
            <person name="Vaillancourt B."/>
            <person name="Sakai H."/>
            <person name="Lee S.S."/>
            <person name="Kim J."/>
            <person name="Numa H."/>
            <person name="Itoh T."/>
            <person name="Buell C.R."/>
            <person name="Matsumoto T."/>
        </authorList>
    </citation>
    <scope>GENOME REANNOTATION</scope>
    <source>
        <strain>cv. Nipponbare</strain>
    </source>
</reference>
<reference key="6">
    <citation type="journal article" date="2005" name="PLoS Biol.">
        <title>The genomes of Oryza sativa: a history of duplications.</title>
        <authorList>
            <person name="Yu J."/>
            <person name="Wang J."/>
            <person name="Lin W."/>
            <person name="Li S."/>
            <person name="Li H."/>
            <person name="Zhou J."/>
            <person name="Ni P."/>
            <person name="Dong W."/>
            <person name="Hu S."/>
            <person name="Zeng C."/>
            <person name="Zhang J."/>
            <person name="Zhang Y."/>
            <person name="Li R."/>
            <person name="Xu Z."/>
            <person name="Li S."/>
            <person name="Li X."/>
            <person name="Zheng H."/>
            <person name="Cong L."/>
            <person name="Lin L."/>
            <person name="Yin J."/>
            <person name="Geng J."/>
            <person name="Li G."/>
            <person name="Shi J."/>
            <person name="Liu J."/>
            <person name="Lv H."/>
            <person name="Li J."/>
            <person name="Wang J."/>
            <person name="Deng Y."/>
            <person name="Ran L."/>
            <person name="Shi X."/>
            <person name="Wang X."/>
            <person name="Wu Q."/>
            <person name="Li C."/>
            <person name="Ren X."/>
            <person name="Wang J."/>
            <person name="Wang X."/>
            <person name="Li D."/>
            <person name="Liu D."/>
            <person name="Zhang X."/>
            <person name="Ji Z."/>
            <person name="Zhao W."/>
            <person name="Sun Y."/>
            <person name="Zhang Z."/>
            <person name="Bao J."/>
            <person name="Han Y."/>
            <person name="Dong L."/>
            <person name="Ji J."/>
            <person name="Chen P."/>
            <person name="Wu S."/>
            <person name="Liu J."/>
            <person name="Xiao Y."/>
            <person name="Bu D."/>
            <person name="Tan J."/>
            <person name="Yang L."/>
            <person name="Ye C."/>
            <person name="Zhang J."/>
            <person name="Xu J."/>
            <person name="Zhou Y."/>
            <person name="Yu Y."/>
            <person name="Zhang B."/>
            <person name="Zhuang S."/>
            <person name="Wei H."/>
            <person name="Liu B."/>
            <person name="Lei M."/>
            <person name="Yu H."/>
            <person name="Li Y."/>
            <person name="Xu H."/>
            <person name="Wei S."/>
            <person name="He X."/>
            <person name="Fang L."/>
            <person name="Zhang Z."/>
            <person name="Zhang Y."/>
            <person name="Huang X."/>
            <person name="Su Z."/>
            <person name="Tong W."/>
            <person name="Li J."/>
            <person name="Tong Z."/>
            <person name="Li S."/>
            <person name="Ye J."/>
            <person name="Wang L."/>
            <person name="Fang L."/>
            <person name="Lei T."/>
            <person name="Chen C.-S."/>
            <person name="Chen H.-C."/>
            <person name="Xu Z."/>
            <person name="Li H."/>
            <person name="Huang H."/>
            <person name="Zhang F."/>
            <person name="Xu H."/>
            <person name="Li N."/>
            <person name="Zhao C."/>
            <person name="Li S."/>
            <person name="Dong L."/>
            <person name="Huang Y."/>
            <person name="Li L."/>
            <person name="Xi Y."/>
            <person name="Qi Q."/>
            <person name="Li W."/>
            <person name="Zhang B."/>
            <person name="Hu W."/>
            <person name="Zhang Y."/>
            <person name="Tian X."/>
            <person name="Jiao Y."/>
            <person name="Liang X."/>
            <person name="Jin J."/>
            <person name="Gao L."/>
            <person name="Zheng W."/>
            <person name="Hao B."/>
            <person name="Liu S.-M."/>
            <person name="Wang W."/>
            <person name="Yuan L."/>
            <person name="Cao M."/>
            <person name="McDermott J."/>
            <person name="Samudrala R."/>
            <person name="Wang J."/>
            <person name="Wong G.K.-S."/>
            <person name="Yang H."/>
        </authorList>
    </citation>
    <scope>NUCLEOTIDE SEQUENCE [LARGE SCALE GENOMIC DNA]</scope>
    <source>
        <strain>cv. Nipponbare</strain>
    </source>
</reference>
<reference key="7">
    <citation type="journal article" date="2003" name="Science">
        <title>Collection, mapping, and annotation of over 28,000 cDNA clones from japonica rice.</title>
        <authorList>
            <consortium name="The rice full-length cDNA consortium"/>
        </authorList>
    </citation>
    <scope>NUCLEOTIDE SEQUENCE [LARGE SCALE MRNA]</scope>
    <source>
        <strain>cv. Nipponbare</strain>
    </source>
</reference>
<reference key="8">
    <citation type="journal article" date="2010" name="Plant Mol. Biol.">
        <title>Mutation in wilted dwarf and lethal 1 (WDL1) causes abnormal cuticle formation and rapid water loss in rice.</title>
        <authorList>
            <person name="Park J.J."/>
            <person name="Jin P."/>
            <person name="Yoon J."/>
            <person name="Yang J.I."/>
            <person name="Jeong H.J."/>
            <person name="Ranathunge K."/>
            <person name="Schreiber L."/>
            <person name="Franke R."/>
            <person name="Lee I.J."/>
            <person name="An G."/>
        </authorList>
    </citation>
    <scope>FUNCTION</scope>
    <scope>SUBCELLULAR LOCATION</scope>
    <scope>TISSUE SPECIFICITY</scope>
    <scope>INDUCTION</scope>
    <scope>DISRUPTION PHENOTYPE</scope>
</reference>
<reference key="9">
    <citation type="journal article" date="2012" name="BMC Genomics">
        <title>Multifunctionality and diversity of GDSL esterase/lipase gene family in rice (Oryza sativa L. japonica) genome: new insights from bioinformatics analysis.</title>
        <authorList>
            <person name="Chepyshko H."/>
            <person name="Lai C.P."/>
            <person name="Huang L.M."/>
            <person name="Liu J.H."/>
            <person name="Shaw J.F."/>
        </authorList>
    </citation>
    <scope>GENE FAMILY</scope>
    <scope>NOMENCLATURE</scope>
</reference>
<comment type="function">
    <text evidence="4">Involved in the organization of leaf cuticle and wax crystals.</text>
</comment>
<comment type="subcellular location">
    <subcellularLocation>
        <location evidence="4">Endoplasmic reticulum</location>
    </subcellularLocation>
</comment>
<comment type="tissue specificity">
    <text evidence="4">Highly expressed in panicles (PubMed:20593223). Expressed in shoots, mature flowers and seeds (PubMed:20593223).</text>
</comment>
<comment type="induction">
    <text evidence="4">Down-regulated by wounding, drought stress, salt stress and treatment with abscicid acid (ABA).</text>
</comment>
<comment type="disruption phenotype">
    <text evidence="4">Mutant seedlings show a severe growth retardation phenotype and die within 30 days, due to increased rates of water loss.</text>
</comment>
<comment type="similarity">
    <text evidence="7">Belongs to the 'GDSL' lipolytic enzyme family.</text>
</comment>
<name>WDL1_ORYSJ</name>
<dbReference type="EC" id="3.1.1.-"/>
<dbReference type="EMBL" id="AB110185">
    <property type="protein sequence ID" value="BAC78577.1"/>
    <property type="molecule type" value="mRNA"/>
</dbReference>
<dbReference type="EMBL" id="AC133008">
    <property type="protein sequence ID" value="AAX95425.1"/>
    <property type="molecule type" value="Genomic_DNA"/>
</dbReference>
<dbReference type="EMBL" id="DP000010">
    <property type="protein sequence ID" value="ABA95533.1"/>
    <property type="molecule type" value="Genomic_DNA"/>
</dbReference>
<dbReference type="EMBL" id="AP008217">
    <property type="protein sequence ID" value="BAF28925.1"/>
    <property type="molecule type" value="Genomic_DNA"/>
</dbReference>
<dbReference type="EMBL" id="AP014967">
    <property type="protein sequence ID" value="BAT15431.1"/>
    <property type="molecule type" value="Genomic_DNA"/>
</dbReference>
<dbReference type="EMBL" id="CM000148">
    <property type="protein sequence ID" value="EAZ19341.1"/>
    <property type="molecule type" value="Genomic_DNA"/>
</dbReference>
<dbReference type="EMBL" id="AK062013">
    <property type="protein sequence ID" value="BAG88194.1"/>
    <property type="molecule type" value="mRNA"/>
</dbReference>
<dbReference type="EMBL" id="AK067429">
    <property type="protein sequence ID" value="BAG90415.1"/>
    <property type="molecule type" value="mRNA"/>
</dbReference>
<dbReference type="EMBL" id="AK109413">
    <property type="protein sequence ID" value="BAG98728.1"/>
    <property type="molecule type" value="mRNA"/>
</dbReference>
<dbReference type="SMR" id="Q7XXR3"/>
<dbReference type="FunCoup" id="Q7XXR3">
    <property type="interactions" value="80"/>
</dbReference>
<dbReference type="STRING" id="39947.Q7XXR3"/>
<dbReference type="PaxDb" id="39947-Q7XXR3"/>
<dbReference type="EnsemblPlants" id="Os11t0708400-01">
    <property type="protein sequence ID" value="Os11t0708400-01"/>
    <property type="gene ID" value="Os11g0708400"/>
</dbReference>
<dbReference type="EnsemblPlants" id="Os11t0708400-02">
    <property type="protein sequence ID" value="Os11t0708400-02"/>
    <property type="gene ID" value="Os11g0708400"/>
</dbReference>
<dbReference type="Gramene" id="Os11t0708400-01">
    <property type="protein sequence ID" value="Os11t0708400-01"/>
    <property type="gene ID" value="Os11g0708400"/>
</dbReference>
<dbReference type="Gramene" id="Os11t0708400-02">
    <property type="protein sequence ID" value="Os11t0708400-02"/>
    <property type="gene ID" value="Os11g0708400"/>
</dbReference>
<dbReference type="KEGG" id="dosa:Os11g0708400"/>
<dbReference type="KEGG" id="osa:4351232"/>
<dbReference type="eggNOG" id="KOG3035">
    <property type="taxonomic scope" value="Eukaryota"/>
</dbReference>
<dbReference type="HOGENOM" id="CLU_051989_0_2_1"/>
<dbReference type="InParanoid" id="Q7XXR3"/>
<dbReference type="OMA" id="VPIDRYK"/>
<dbReference type="OrthoDB" id="671439at2759"/>
<dbReference type="Proteomes" id="UP000000763">
    <property type="component" value="Chromosome 11"/>
</dbReference>
<dbReference type="Proteomes" id="UP000007752">
    <property type="component" value="Chromosome 11"/>
</dbReference>
<dbReference type="Proteomes" id="UP000059680">
    <property type="component" value="Chromosome 11"/>
</dbReference>
<dbReference type="GO" id="GO:0005783">
    <property type="term" value="C:endoplasmic reticulum"/>
    <property type="evidence" value="ECO:0007669"/>
    <property type="project" value="UniProtKB-SubCell"/>
</dbReference>
<dbReference type="GO" id="GO:0016787">
    <property type="term" value="F:hydrolase activity"/>
    <property type="evidence" value="ECO:0007669"/>
    <property type="project" value="UniProtKB-KW"/>
</dbReference>
<dbReference type="CDD" id="cd01838">
    <property type="entry name" value="Isoamyl_acetate_hydrolase_like"/>
    <property type="match status" value="1"/>
</dbReference>
<dbReference type="FunFam" id="3.40.50.1110:FF:000002">
    <property type="entry name" value="isoamyl acetate-hydrolyzing esterase 1 homolog"/>
    <property type="match status" value="1"/>
</dbReference>
<dbReference type="Gene3D" id="3.40.50.1110">
    <property type="entry name" value="SGNH hydrolase"/>
    <property type="match status" value="1"/>
</dbReference>
<dbReference type="InterPro" id="IPR045136">
    <property type="entry name" value="Iah1-like"/>
</dbReference>
<dbReference type="InterPro" id="IPR013830">
    <property type="entry name" value="SGNH_hydro"/>
</dbReference>
<dbReference type="InterPro" id="IPR036514">
    <property type="entry name" value="SGNH_hydro_sf"/>
</dbReference>
<dbReference type="PANTHER" id="PTHR14209:SF9">
    <property type="entry name" value="GDSL ESTERASE_LIPASE CPRD49"/>
    <property type="match status" value="1"/>
</dbReference>
<dbReference type="PANTHER" id="PTHR14209">
    <property type="entry name" value="ISOAMYL ACETATE-HYDROLYZING ESTERASE 1"/>
    <property type="match status" value="1"/>
</dbReference>
<dbReference type="Pfam" id="PF13472">
    <property type="entry name" value="Lipase_GDSL_2"/>
    <property type="match status" value="1"/>
</dbReference>
<dbReference type="SUPFAM" id="SSF52266">
    <property type="entry name" value="SGNH hydrolase"/>
    <property type="match status" value="1"/>
</dbReference>
<feature type="signal peptide" evidence="2">
    <location>
        <begin position="1"/>
        <end position="35"/>
    </location>
</feature>
<feature type="chain" id="PRO_0000456350" description="GDSL esterase/lipase WDL1" evidence="2">
    <location>
        <begin position="36"/>
        <end position="260"/>
    </location>
</feature>
<feature type="active site" description="Nucleophile" evidence="1">
    <location>
        <position position="18"/>
    </location>
</feature>
<feature type="active site" evidence="1">
    <location>
        <position position="191"/>
    </location>
</feature>
<feature type="active site" evidence="1">
    <location>
        <position position="194"/>
    </location>
</feature>
<feature type="glycosylation site" description="N-linked (GlcNAc...) asparagine" evidence="3">
    <location>
        <position position="83"/>
    </location>
</feature>
<feature type="glycosylation site" description="N-linked (GlcNAc...) asparagine" evidence="3">
    <location>
        <position position="150"/>
    </location>
</feature>
<organism>
    <name type="scientific">Oryza sativa subsp. japonica</name>
    <name type="common">Rice</name>
    <dbReference type="NCBI Taxonomy" id="39947"/>
    <lineage>
        <taxon>Eukaryota</taxon>
        <taxon>Viridiplantae</taxon>
        <taxon>Streptophyta</taxon>
        <taxon>Embryophyta</taxon>
        <taxon>Tracheophyta</taxon>
        <taxon>Spermatophyta</taxon>
        <taxon>Magnoliopsida</taxon>
        <taxon>Liliopsida</taxon>
        <taxon>Poales</taxon>
        <taxon>Poaceae</taxon>
        <taxon>BOP clade</taxon>
        <taxon>Oryzoideae</taxon>
        <taxon>Oryzeae</taxon>
        <taxon>Oryzinae</taxon>
        <taxon>Oryza</taxon>
        <taxon>Oryza sativa</taxon>
    </lineage>
</organism>
<protein>
    <recommendedName>
        <fullName evidence="5">GDSL esterase/lipase WDL1</fullName>
        <ecNumber>3.1.1.-</ecNumber>
    </recommendedName>
    <alternativeName>
        <fullName evidence="6">GDSL esterase/lipase 112</fullName>
        <shortName evidence="6">OsGELP112</shortName>
    </alternativeName>
    <alternativeName>
        <fullName evidence="5">Protein WILTED DWARF AND LETHAL 1</fullName>
    </alternativeName>
</protein>